<comment type="function">
    <text evidence="1">Component of the molecular motor that translocates viral genomic DNA in empty capsid during DNA packaging. Forms a tripartite terminase complex together with TRM1 and TRM2 in the host cytoplasm. Once the complex reaches the host nucleus, it interacts with the capsid portal vertex. This portal forms a ring in which genomic DNA is translocated into the capsid. TRM3 carries an RNase H-like nuclease activity that plays an important role for the cleavage of concatemeric viral DNA into unit length genomes.</text>
</comment>
<comment type="subunit">
    <text evidence="1">Interacts with the terminase subunits TRM1 and TRM2. Interacts with portal protein.</text>
</comment>
<comment type="subcellular location">
    <subcellularLocation>
        <location evidence="1">Host nucleus</location>
    </subcellularLocation>
    <text evidence="1">Responsible for the nuclear localization of the two others subunits TRM1 and TRM2.</text>
</comment>
<comment type="similarity">
    <text evidence="1">Belongs to the herpesviridae TRM3 protein family.</text>
</comment>
<name>TRM3_HHV7J</name>
<organism>
    <name type="scientific">Human herpesvirus 7 (strain JI)</name>
    <name type="common">HHV-7</name>
    <name type="synonym">Human T lymphotropic virus</name>
    <dbReference type="NCBI Taxonomy" id="57278"/>
    <lineage>
        <taxon>Viruses</taxon>
        <taxon>Duplodnaviria</taxon>
        <taxon>Heunggongvirae</taxon>
        <taxon>Peploviricota</taxon>
        <taxon>Herviviricetes</taxon>
        <taxon>Herpesvirales</taxon>
        <taxon>Orthoherpesviridae</taxon>
        <taxon>Betaherpesvirinae</taxon>
        <taxon>Roseolovirus</taxon>
        <taxon>Roseolovirus humanbeta7</taxon>
        <taxon>Human betaherpesvirus 7</taxon>
    </lineage>
</organism>
<sequence>MLRSCDIDAIQKAYQSIIWKHEQDVKISSTFPNSAIFCQKRFIILTPELGFTHAYCRHVKPLYLFCDRQRHVKSKIAICDPLNCALSKLKFTAIIEKNTEVQYQKHLELQTSFYRNPMFLQIEKFIQDFQRWICGDFENTNKKERIKLEPFQKSILIHIIFFISVTKLPTLANHVLDYLKYKFDIEFINESSVNILKQKASVFLVPRRHGKTWFMIPVICFLLKNLEGISIGYVAHQKHVSHFVMKDVEFKCRRFFPQKNITCQDNVITIEHETIKSTALFASCYNTHSIRGQSFNLLIVDESHFIKKDAFSTILGFLPQSSTKIIFISSTNSGNHSTSFLTKLSNSPFEMLTVVSYVCEDHVHILNDRGNATTCACYRLHKPKFISINADVKKTADLFLEGAFKHEIMGGSLCNVVNDTLITEQGLIEFDLFRYSTISKQIIPFLGKELYIYIDPAYTINRRASGTGVAAIGTYGDQYIIYGMEHYFLESLLSNSDASIAECASHMILAVLELHPFFTELKIIIEGNSNQSSAVKIACILKQTISVIRYKHITFFHTLDQSQIAQPFYLLGREKRLAVEYFISNFNSGYIKASQELISFTIKITYDPIEYVIEQIKNLHQININEHVTYNAKKQTCSDDLLISIIMAIYMCHEGKQTSFKEI</sequence>
<organismHost>
    <name type="scientific">Homo sapiens</name>
    <name type="common">Human</name>
    <dbReference type="NCBI Taxonomy" id="9606"/>
</organismHost>
<gene>
    <name evidence="1" type="primary">TRM3</name>
    <name type="ordered locus">U66/U60</name>
</gene>
<accession>P52462</accession>
<protein>
    <recommendedName>
        <fullName evidence="1">Tripartite terminase subunit 3</fullName>
        <ecNumber evidence="1">3.1.-.-</ecNumber>
    </recommendedName>
    <alternativeName>
        <fullName evidence="1">Terminase large subunit</fullName>
    </alternativeName>
</protein>
<evidence type="ECO:0000255" key="1">
    <source>
        <dbReference type="HAMAP-Rule" id="MF_04013"/>
    </source>
</evidence>
<dbReference type="EC" id="3.1.-.-" evidence="1"/>
<dbReference type="EMBL" id="U43400">
    <property type="protein sequence ID" value="AAC54723.1"/>
    <property type="molecule type" value="Genomic_DNA"/>
</dbReference>
<dbReference type="PIR" id="T41963">
    <property type="entry name" value="T41963"/>
</dbReference>
<dbReference type="SMR" id="P52462"/>
<dbReference type="DNASU" id="3289524"/>
<dbReference type="KEGG" id="vg:3289524"/>
<dbReference type="Proteomes" id="UP000009246">
    <property type="component" value="Segment"/>
</dbReference>
<dbReference type="GO" id="GO:0042025">
    <property type="term" value="C:host cell nucleus"/>
    <property type="evidence" value="ECO:0007669"/>
    <property type="project" value="UniProtKB-SubCell"/>
</dbReference>
<dbReference type="GO" id="GO:0003677">
    <property type="term" value="F:DNA binding"/>
    <property type="evidence" value="ECO:0007669"/>
    <property type="project" value="UniProtKB-KW"/>
</dbReference>
<dbReference type="GO" id="GO:0016787">
    <property type="term" value="F:hydrolase activity"/>
    <property type="evidence" value="ECO:0007669"/>
    <property type="project" value="UniProtKB-KW"/>
</dbReference>
<dbReference type="GO" id="GO:0051276">
    <property type="term" value="P:chromosome organization"/>
    <property type="evidence" value="ECO:0007669"/>
    <property type="project" value="InterPro"/>
</dbReference>
<dbReference type="Gene3D" id="3.30.420.320">
    <property type="match status" value="1"/>
</dbReference>
<dbReference type="Gene3D" id="3.40.50.300">
    <property type="entry name" value="P-loop containing nucleotide triphosphate hydrolases"/>
    <property type="match status" value="1"/>
</dbReference>
<dbReference type="HAMAP" id="MF_04013">
    <property type="entry name" value="HSV_TRM3"/>
    <property type="match status" value="1"/>
</dbReference>
<dbReference type="InterPro" id="IPR003498">
    <property type="entry name" value="DNA_pack_C"/>
</dbReference>
<dbReference type="InterPro" id="IPR038435">
    <property type="entry name" value="DNA_pack_C_sf"/>
</dbReference>
<dbReference type="InterPro" id="IPR003499">
    <property type="entry name" value="DNA_pack_N"/>
</dbReference>
<dbReference type="InterPro" id="IPR033663">
    <property type="entry name" value="HSV_TRM3"/>
</dbReference>
<dbReference type="InterPro" id="IPR027417">
    <property type="entry name" value="P-loop_NTPase"/>
</dbReference>
<dbReference type="Pfam" id="PF02499">
    <property type="entry name" value="DNA_pack_C"/>
    <property type="match status" value="1"/>
</dbReference>
<dbReference type="Pfam" id="PF02500">
    <property type="entry name" value="DNA_pack_N"/>
    <property type="match status" value="1"/>
</dbReference>
<dbReference type="SUPFAM" id="SSF52540">
    <property type="entry name" value="P-loop containing nucleoside triphosphate hydrolases"/>
    <property type="match status" value="1"/>
</dbReference>
<keyword id="KW-0238">DNA-binding</keyword>
<keyword id="KW-1048">Host nucleus</keyword>
<keyword id="KW-0378">Hydrolase</keyword>
<keyword id="KW-1185">Reference proteome</keyword>
<keyword id="KW-0231">Viral genome packaging</keyword>
<keyword id="KW-1188">Viral release from host cell</keyword>
<feature type="chain" id="PRO_0000115942" description="Tripartite terminase subunit 3">
    <location>
        <begin position="1"/>
        <end position="663"/>
    </location>
</feature>
<feature type="short sequence motif" description="Walker A motif" evidence="1">
    <location>
        <begin position="205"/>
        <end position="212"/>
    </location>
</feature>
<feature type="short sequence motif" description="Walker B motif" evidence="1">
    <location>
        <begin position="297"/>
        <end position="302"/>
    </location>
</feature>
<feature type="active site" description="For ATPase activity" evidence="1">
    <location>
        <position position="302"/>
    </location>
</feature>
<feature type="active site" description="For nuclease activity" evidence="1">
    <location>
        <position position="455"/>
    </location>
</feature>
<feature type="active site" description="For nuclease activity" evidence="1">
    <location>
        <position position="526"/>
    </location>
</feature>
<feature type="active site" description="For nuclease activity" evidence="1">
    <location>
        <position position="640"/>
    </location>
</feature>
<proteinExistence type="inferred from homology"/>
<reference key="1">
    <citation type="journal article" date="1996" name="J. Virol.">
        <title>Determination and analysis of the complete nucleotide sequence of human herpesvirus.</title>
        <authorList>
            <person name="Nicholas J."/>
        </authorList>
    </citation>
    <scope>NUCLEOTIDE SEQUENCE [LARGE SCALE GENOMIC DNA]</scope>
</reference>